<comment type="function">
    <text evidence="3">Involved in base excision repair of DNA damaged by oxidation or by mutagenic agents. Acts as DNA glycosylase that recognizes and removes damaged bases.</text>
</comment>
<comment type="function">
    <text evidence="4 5 8">Involved in the repair of psoralen-UVA DNA cross-links (PubMed:39012146). A lyase that cleaves single-stranded (ss)DNA but not double-stranded (ds)DNA with an abasic site (PubMed:36610794). Has 5-hydroxyuracil (5-OH-U) glycosylase activity on ssDNA with 5-OH-U, with 10-fold less activity on dsDNA, but weak to no uracil glycosylase activity (PubMed:36610794, PubMed:39012146). Has weak glycosylase activity on thymine glycol and dihydrothymine residues in ssDNA (PubMed:39012146). Cleaves the DNA backbone by beta-delta elimination to generate a single-strand break at the site of the removed base with both 3'- and 5'-phosphates (Probable) (PubMed:39012146).</text>
</comment>
<comment type="catalytic activity">
    <reaction evidence="3 4 5">
        <text>2'-deoxyribonucleotide-(2'-deoxyribose 5'-phosphate)-2'-deoxyribonucleotide-DNA = a 3'-end 2'-deoxyribonucleotide-(2,3-dehydro-2,3-deoxyribose 5'-phosphate)-DNA + a 5'-end 5'-phospho-2'-deoxyribonucleoside-DNA + H(+)</text>
        <dbReference type="Rhea" id="RHEA:66592"/>
        <dbReference type="Rhea" id="RHEA-COMP:13180"/>
        <dbReference type="Rhea" id="RHEA-COMP:16897"/>
        <dbReference type="Rhea" id="RHEA-COMP:17067"/>
        <dbReference type="ChEBI" id="CHEBI:15378"/>
        <dbReference type="ChEBI" id="CHEBI:136412"/>
        <dbReference type="ChEBI" id="CHEBI:157695"/>
        <dbReference type="ChEBI" id="CHEBI:167181"/>
        <dbReference type="EC" id="4.2.99.18"/>
    </reaction>
</comment>
<comment type="cofactor">
    <cofactor evidence="2 5">
        <name>Zn(2+)</name>
        <dbReference type="ChEBI" id="CHEBI:29105"/>
    </cofactor>
    <text evidence="2 5">Binds 1 zinc ion per subunit.</text>
</comment>
<comment type="subunit">
    <text evidence="4 5">Monomer.</text>
</comment>
<comment type="disruption phenotype">
    <text evidence="5">Greatly increased sensitivity to trioxsalen (also called trimethlypsoralen, it intercalates into DNA and forms interstrand adducts and cross-links after UVA exposure) (PubMed:39012146). No change in sensitivity to other DNA damaging agents cisplatin, mitomycin C, UV light or methyl methanesulfonate (PubMed:39012146).</text>
</comment>
<comment type="similarity">
    <text evidence="3">Belongs to the FPG family.</text>
</comment>
<organism>
    <name type="scientific">Mycolicibacterium smegmatis (strain ATCC 700084 / mc(2)155)</name>
    <name type="common">Mycobacterium smegmatis</name>
    <dbReference type="NCBI Taxonomy" id="246196"/>
    <lineage>
        <taxon>Bacteria</taxon>
        <taxon>Bacillati</taxon>
        <taxon>Actinomycetota</taxon>
        <taxon>Actinomycetes</taxon>
        <taxon>Mycobacteriales</taxon>
        <taxon>Mycobacteriaceae</taxon>
        <taxon>Mycolicibacterium</taxon>
    </lineage>
</organism>
<sequence>MPEGDTVFHTAAALRAALEGKTLTRCDVRVPRYATVDLSGAVVDEVLSRGKHLFIRAGSASIHSHLKMEGAWRIGHTKVAPHRIRIVLETADTRAIGIDLGILEVLDRGTDMDAVAYLGPDLLGPDWEPRVAADNLAADPDRPLAQALLDQRVMAGVGNVYCNELCFVFGRLPTAPVGTLKDPLRVVQRARDMLWLNRSRWNRTTTGDTRNGRQLWVYGRAGEPCRRCGTLIQTDRGGERVTYWCPVCQTAS</sequence>
<gene>
    <name evidence="6" type="primary">nei2</name>
    <name evidence="9" type="ordered locus">MSMEG_1756</name>
</gene>
<accession>A0QT90</accession>
<accession>I7G4T3</accession>
<feature type="chain" id="PRO_0000462448" description="DNA-(apurinic or apyrimidinic site) lyase Nei2">
    <location>
        <begin position="1"/>
        <end position="252"/>
    </location>
</feature>
<feature type="zinc finger region" description="FPG-type" evidence="2">
    <location>
        <begin position="216"/>
        <end position="250"/>
    </location>
</feature>
<feature type="active site" description="Schiff-base intermediate with DNA" evidence="3 7 8">
    <location>
        <position position="2"/>
    </location>
</feature>
<feature type="active site" description="Proton donor" evidence="3">
    <location>
        <position position="3"/>
    </location>
</feature>
<feature type="active site" description="Proton donor (in beta-elimination)" evidence="3">
    <location>
        <position position="51"/>
    </location>
</feature>
<feature type="binding site" evidence="5 11">
    <location>
        <position position="225"/>
    </location>
    <ligand>
        <name>Zn(2+)</name>
        <dbReference type="ChEBI" id="CHEBI:29105"/>
    </ligand>
</feature>
<feature type="binding site" evidence="5 11">
    <location>
        <position position="228"/>
    </location>
    <ligand>
        <name>Zn(2+)</name>
        <dbReference type="ChEBI" id="CHEBI:29105"/>
    </ligand>
</feature>
<feature type="binding site" evidence="5 11">
    <location>
        <position position="245"/>
    </location>
    <ligand>
        <name>Zn(2+)</name>
        <dbReference type="ChEBI" id="CHEBI:29105"/>
    </ligand>
</feature>
<feature type="binding site" evidence="5 11">
    <location>
        <position position="248"/>
    </location>
    <ligand>
        <name>Zn(2+)</name>
        <dbReference type="ChEBI" id="CHEBI:29105"/>
    </ligand>
</feature>
<feature type="mutagenesis site" description="Loss of lyase activity on an abasic site, rescues trioxsalen sensitivity of a deletion mutant, wild-type glycosylase activity on 5-hydroxyuracil (5-OH-U)." evidence="5">
    <original>P</original>
    <variation>A</variation>
    <location>
        <position position="2"/>
    </location>
</feature>
<feature type="mutagenesis site" description="Loss of lyase activity on an abasic site, rescues trioxsalen sensitivity of a deletion mutant, loss of glycosylase activity on 5-OH-U." evidence="5">
    <original>P</original>
    <variation>C</variation>
    <location>
        <position position="2"/>
    </location>
</feature>
<feature type="mutagenesis site" description="Nearly wild-type lyase activity on an abasic site, does not rescue trioxsalen sensitivity of a deletion mutant, loss of glycosylase activity on 5-OH-U." evidence="5">
    <original>E</original>
    <variation>A</variation>
    <location>
        <position position="3"/>
    </location>
</feature>
<feature type="mutagenesis site" description="Loss of lyase activity on an abasic site, partially rescues trioxsalen sensitivity of a deletion mutant, loss of glycosylase activity on 5-OH-U." evidence="5">
    <original>K</original>
    <variation>A</variation>
    <location>
        <position position="51"/>
    </location>
</feature>
<protein>
    <recommendedName>
        <fullName evidence="6">DNA-(apurinic or apyrimidinic site) lyase Nei2</fullName>
        <shortName evidence="6">AP lyase</shortName>
        <ecNumber evidence="3 5">3.2.2.-</ecNumber>
        <ecNumber evidence="3 4 5">4.2.99.18</ecNumber>
    </recommendedName>
    <alternativeName>
        <fullName evidence="1">Endonuclease 8 2</fullName>
    </alternativeName>
</protein>
<dbReference type="EC" id="3.2.2.-" evidence="3 5"/>
<dbReference type="EC" id="4.2.99.18" evidence="3 4 5"/>
<dbReference type="EMBL" id="CP000480">
    <property type="protein sequence ID" value="ABK74586.1"/>
    <property type="molecule type" value="Genomic_DNA"/>
</dbReference>
<dbReference type="EMBL" id="CP001663">
    <property type="protein sequence ID" value="AFP38186.1"/>
    <property type="molecule type" value="Genomic_DNA"/>
</dbReference>
<dbReference type="RefSeq" id="YP_886128.1">
    <property type="nucleotide sequence ID" value="NC_008596.1"/>
</dbReference>
<dbReference type="PDB" id="8TJG">
    <property type="method" value="X-ray"/>
    <property type="resolution" value="1.45 A"/>
    <property type="chains" value="A=1-252"/>
</dbReference>
<dbReference type="PDBsum" id="8TJG"/>
<dbReference type="SMR" id="A0QT90"/>
<dbReference type="STRING" id="246196.MSMEG_1756"/>
<dbReference type="PaxDb" id="246196-MSMEI_1714"/>
<dbReference type="KEGG" id="msb:LJ00_08765"/>
<dbReference type="KEGG" id="msm:MSMEG_1756"/>
<dbReference type="PATRIC" id="fig|246196.19.peg.1739"/>
<dbReference type="eggNOG" id="COG0266">
    <property type="taxonomic scope" value="Bacteria"/>
</dbReference>
<dbReference type="OrthoDB" id="9800855at2"/>
<dbReference type="Proteomes" id="UP000000757">
    <property type="component" value="Chromosome"/>
</dbReference>
<dbReference type="Proteomes" id="UP000006158">
    <property type="component" value="Chromosome"/>
</dbReference>
<dbReference type="GO" id="GO:0140078">
    <property type="term" value="F:class I DNA-(apurinic or apyrimidinic site) endonuclease activity"/>
    <property type="evidence" value="ECO:0007669"/>
    <property type="project" value="UniProtKB-EC"/>
</dbReference>
<dbReference type="GO" id="GO:0003684">
    <property type="term" value="F:damaged DNA binding"/>
    <property type="evidence" value="ECO:0007669"/>
    <property type="project" value="InterPro"/>
</dbReference>
<dbReference type="GO" id="GO:0004519">
    <property type="term" value="F:endonuclease activity"/>
    <property type="evidence" value="ECO:0007669"/>
    <property type="project" value="UniProtKB-KW"/>
</dbReference>
<dbReference type="GO" id="GO:0000703">
    <property type="term" value="F:oxidized pyrimidine nucleobase lesion DNA N-glycosylase activity"/>
    <property type="evidence" value="ECO:0007669"/>
    <property type="project" value="TreeGrafter"/>
</dbReference>
<dbReference type="GO" id="GO:0008270">
    <property type="term" value="F:zinc ion binding"/>
    <property type="evidence" value="ECO:0007669"/>
    <property type="project" value="UniProtKB-KW"/>
</dbReference>
<dbReference type="GO" id="GO:0006284">
    <property type="term" value="P:base-excision repair"/>
    <property type="evidence" value="ECO:0007669"/>
    <property type="project" value="InterPro"/>
</dbReference>
<dbReference type="CDD" id="cd08971">
    <property type="entry name" value="AcNei2_N"/>
    <property type="match status" value="1"/>
</dbReference>
<dbReference type="Gene3D" id="1.10.8.50">
    <property type="match status" value="1"/>
</dbReference>
<dbReference type="Gene3D" id="3.20.190.10">
    <property type="entry name" value="MutM-like, N-terminal"/>
    <property type="match status" value="1"/>
</dbReference>
<dbReference type="InterPro" id="IPR015886">
    <property type="entry name" value="DNA_glyclase/AP_lyase_DNA-bd"/>
</dbReference>
<dbReference type="InterPro" id="IPR015887">
    <property type="entry name" value="DNA_glyclase_Znf_dom_DNA_BS"/>
</dbReference>
<dbReference type="InterPro" id="IPR054878">
    <property type="entry name" value="Endonuc_Nei2"/>
</dbReference>
<dbReference type="InterPro" id="IPR012319">
    <property type="entry name" value="FPG_cat"/>
</dbReference>
<dbReference type="InterPro" id="IPR035937">
    <property type="entry name" value="MutM-like_N-ter"/>
</dbReference>
<dbReference type="InterPro" id="IPR044090">
    <property type="entry name" value="Nei2_N"/>
</dbReference>
<dbReference type="InterPro" id="IPR010979">
    <property type="entry name" value="Ribosomal_uS13-like_H2TH"/>
</dbReference>
<dbReference type="InterPro" id="IPR000214">
    <property type="entry name" value="Znf_DNA_glyclase/AP_lyase"/>
</dbReference>
<dbReference type="InterPro" id="IPR010663">
    <property type="entry name" value="Znf_FPG/IleRS"/>
</dbReference>
<dbReference type="NCBIfam" id="NF040775">
    <property type="entry name" value="endonuc_Nei2"/>
    <property type="match status" value="1"/>
</dbReference>
<dbReference type="PANTHER" id="PTHR42697">
    <property type="entry name" value="ENDONUCLEASE 8"/>
    <property type="match status" value="1"/>
</dbReference>
<dbReference type="PANTHER" id="PTHR42697:SF1">
    <property type="entry name" value="ENDONUCLEASE 8"/>
    <property type="match status" value="1"/>
</dbReference>
<dbReference type="Pfam" id="PF01149">
    <property type="entry name" value="Fapy_DNA_glyco"/>
    <property type="match status" value="1"/>
</dbReference>
<dbReference type="Pfam" id="PF06827">
    <property type="entry name" value="zf-FPG_IleRS"/>
    <property type="match status" value="1"/>
</dbReference>
<dbReference type="SMART" id="SM00898">
    <property type="entry name" value="Fapy_DNA_glyco"/>
    <property type="match status" value="1"/>
</dbReference>
<dbReference type="SMART" id="SM01232">
    <property type="entry name" value="H2TH"/>
    <property type="match status" value="1"/>
</dbReference>
<dbReference type="SUPFAM" id="SSF57716">
    <property type="entry name" value="Glucocorticoid receptor-like (DNA-binding domain)"/>
    <property type="match status" value="1"/>
</dbReference>
<dbReference type="SUPFAM" id="SSF81624">
    <property type="entry name" value="N-terminal domain of MutM-like DNA repair proteins"/>
    <property type="match status" value="1"/>
</dbReference>
<dbReference type="SUPFAM" id="SSF46946">
    <property type="entry name" value="S13-like H2TH domain"/>
    <property type="match status" value="1"/>
</dbReference>
<dbReference type="PROSITE" id="PS51068">
    <property type="entry name" value="FPG_CAT"/>
    <property type="match status" value="1"/>
</dbReference>
<dbReference type="PROSITE" id="PS01242">
    <property type="entry name" value="ZF_FPG_1"/>
    <property type="match status" value="1"/>
</dbReference>
<dbReference type="PROSITE" id="PS51066">
    <property type="entry name" value="ZF_FPG_2"/>
    <property type="match status" value="1"/>
</dbReference>
<keyword id="KW-0002">3D-structure</keyword>
<keyword id="KW-0227">DNA damage</keyword>
<keyword id="KW-0234">DNA repair</keyword>
<keyword id="KW-0238">DNA-binding</keyword>
<keyword id="KW-0326">Glycosidase</keyword>
<keyword id="KW-0378">Hydrolase</keyword>
<keyword id="KW-0456">Lyase</keyword>
<keyword id="KW-0479">Metal-binding</keyword>
<keyword id="KW-0511">Multifunctional enzyme</keyword>
<keyword id="KW-1185">Reference proteome</keyword>
<keyword id="KW-0862">Zinc</keyword>
<keyword id="KW-0863">Zinc-finger</keyword>
<reference evidence="9" key="1">
    <citation type="submission" date="2006-10" db="EMBL/GenBank/DDBJ databases">
        <authorList>
            <person name="Fleischmann R.D."/>
            <person name="Dodson R.J."/>
            <person name="Haft D.H."/>
            <person name="Merkel J.S."/>
            <person name="Nelson W.C."/>
            <person name="Fraser C.M."/>
        </authorList>
    </citation>
    <scope>NUCLEOTIDE SEQUENCE [LARGE SCALE GENOMIC DNA]</scope>
    <source>
        <strain>ATCC 700084 / mc(2)155</strain>
    </source>
</reference>
<reference evidence="10" key="2">
    <citation type="journal article" date="2007" name="Genome Biol.">
        <title>Interrupted coding sequences in Mycobacterium smegmatis: authentic mutations or sequencing errors?</title>
        <authorList>
            <person name="Deshayes C."/>
            <person name="Perrodou E."/>
            <person name="Gallien S."/>
            <person name="Euphrasie D."/>
            <person name="Schaeffer C."/>
            <person name="Van-Dorsselaer A."/>
            <person name="Poch O."/>
            <person name="Lecompte O."/>
            <person name="Reyrat J.-M."/>
        </authorList>
    </citation>
    <scope>NUCLEOTIDE SEQUENCE [LARGE SCALE GENOMIC DNA]</scope>
    <source>
        <strain>ATCC 700084 / mc(2)155</strain>
    </source>
</reference>
<reference evidence="10" key="3">
    <citation type="journal article" date="2009" name="Genome Res.">
        <title>Ortho-proteogenomics: multiple proteomes investigation through orthology and a new MS-based protocol.</title>
        <authorList>
            <person name="Gallien S."/>
            <person name="Perrodou E."/>
            <person name="Carapito C."/>
            <person name="Deshayes C."/>
            <person name="Reyrat J.-M."/>
            <person name="Van Dorsselaer A."/>
            <person name="Poch O."/>
            <person name="Schaeffer C."/>
            <person name="Lecompte O."/>
        </authorList>
    </citation>
    <scope>NUCLEOTIDE SEQUENCE [LARGE SCALE GENOMIC DNA]</scope>
    <source>
        <strain>ATCC 700084 / mc(2)155</strain>
    </source>
</reference>
<reference key="4">
    <citation type="journal article" date="2023" name="Nucleic Acids Res.">
        <title>Mycobacterial helicase Lhr abets resistance to DNA crosslinking agents mitomycin C and cisplatin.</title>
        <authorList>
            <person name="Warren G.M."/>
            <person name="Ejaz A."/>
            <person name="Fay A."/>
            <person name="Glickman M.S."/>
            <person name="Shuman S."/>
        </authorList>
    </citation>
    <scope>FUNCTION</scope>
    <scope>CATALYTIC ACTIVITY</scope>
    <scope>PROBABLE ACTIVE SITE</scope>
    <scope>SUBUNIT</scope>
    <source>
        <strain>ATCC 700084 / mc(2)155</strain>
    </source>
</reference>
<reference evidence="11" key="5">
    <citation type="journal article" date="2024" name="MBio">
        <title>Structure and in vivo psoralen DNA crosslink repair activity of mycobacterial Nei2.</title>
        <authorList>
            <person name="Warren G.M."/>
            <person name="Shuman S."/>
        </authorList>
    </citation>
    <scope>X-RAY CRYSTALLOGRAPHY (1.45 ANGSTROMS) IN COMPLEX WITH ZN(2+)</scope>
    <scope>FUNCTION</scope>
    <scope>CATALYTIC ACTIVITY</scope>
    <scope>PROBABLE ACTIVE SITE</scope>
    <scope>COFACTOR</scope>
    <scope>SUBUNIT</scope>
    <scope>DISRUPTION PHENOTYPE</scope>
    <scope>MUTAGENESIS OF PRO-2; GLU-3 AND LYS-51</scope>
    <source>
        <strain>ATCC 700084 / mc(2)155</strain>
    </source>
</reference>
<proteinExistence type="evidence at protein level"/>
<name>END8B_MYCS2</name>
<evidence type="ECO:0000250" key="1">
    <source>
        <dbReference type="UniProtKB" id="P9WNC1"/>
    </source>
</evidence>
<evidence type="ECO:0000255" key="2">
    <source>
        <dbReference type="PROSITE-ProRule" id="PRU00391"/>
    </source>
</evidence>
<evidence type="ECO:0000255" key="3">
    <source>
        <dbReference type="PROSITE-ProRule" id="PRU00392"/>
    </source>
</evidence>
<evidence type="ECO:0000269" key="4">
    <source>
    </source>
</evidence>
<evidence type="ECO:0000269" key="5">
    <source>
    </source>
</evidence>
<evidence type="ECO:0000303" key="6">
    <source>
    </source>
</evidence>
<evidence type="ECO:0000305" key="7">
    <source>
    </source>
</evidence>
<evidence type="ECO:0000305" key="8">
    <source>
    </source>
</evidence>
<evidence type="ECO:0000312" key="9">
    <source>
        <dbReference type="EMBL" id="ABK74586.1"/>
    </source>
</evidence>
<evidence type="ECO:0000312" key="10">
    <source>
        <dbReference type="EMBL" id="AFP38186.1"/>
    </source>
</evidence>
<evidence type="ECO:0007744" key="11">
    <source>
        <dbReference type="PDB" id="8TJG"/>
    </source>
</evidence>